<proteinExistence type="evidence at protein level"/>
<feature type="signal peptide" evidence="2">
    <location>
        <begin position="1"/>
        <end position="17"/>
    </location>
</feature>
<feature type="propeptide" id="PRO_0000436736" evidence="1">
    <location>
        <begin position="18"/>
        <end position="45"/>
    </location>
</feature>
<feature type="chain" id="PRO_0000436737" description="Fimbrium subunit Fim1C">
    <location>
        <begin position="46"/>
        <end position="379"/>
    </location>
</feature>
<feature type="lipid moiety-binding region" description="N-palmitoyl cysteine" evidence="2">
    <location>
        <position position="18"/>
    </location>
</feature>
<feature type="lipid moiety-binding region" description="S-diacylglycerol cysteine" evidence="2">
    <location>
        <position position="18"/>
    </location>
</feature>
<feature type="strand" evidence="8">
    <location>
        <begin position="35"/>
        <end position="38"/>
    </location>
</feature>
<feature type="helix" evidence="8">
    <location>
        <begin position="50"/>
        <end position="56"/>
    </location>
</feature>
<feature type="strand" evidence="8">
    <location>
        <begin position="60"/>
        <end position="67"/>
    </location>
</feature>
<feature type="helix" evidence="8">
    <location>
        <begin position="72"/>
        <end position="75"/>
    </location>
</feature>
<feature type="helix" evidence="8">
    <location>
        <begin position="76"/>
        <end position="78"/>
    </location>
</feature>
<feature type="strand" evidence="8">
    <location>
        <begin position="83"/>
        <end position="92"/>
    </location>
</feature>
<feature type="strand" evidence="8">
    <location>
        <begin position="95"/>
        <end position="97"/>
    </location>
</feature>
<feature type="strand" evidence="8">
    <location>
        <begin position="106"/>
        <end position="108"/>
    </location>
</feature>
<feature type="strand" evidence="8">
    <location>
        <begin position="110"/>
        <end position="118"/>
    </location>
</feature>
<feature type="turn" evidence="8">
    <location>
        <begin position="123"/>
        <end position="125"/>
    </location>
</feature>
<feature type="turn" evidence="8">
    <location>
        <begin position="127"/>
        <end position="129"/>
    </location>
</feature>
<feature type="strand" evidence="8">
    <location>
        <begin position="130"/>
        <end position="133"/>
    </location>
</feature>
<feature type="strand" evidence="8">
    <location>
        <begin position="143"/>
        <end position="147"/>
    </location>
</feature>
<feature type="turn" evidence="8">
    <location>
        <begin position="151"/>
        <end position="156"/>
    </location>
</feature>
<feature type="strand" evidence="8">
    <location>
        <begin position="161"/>
        <end position="163"/>
    </location>
</feature>
<feature type="helix" evidence="8">
    <location>
        <begin position="166"/>
        <end position="168"/>
    </location>
</feature>
<feature type="strand" evidence="8">
    <location>
        <begin position="169"/>
        <end position="171"/>
    </location>
</feature>
<feature type="turn" evidence="8">
    <location>
        <begin position="173"/>
        <end position="178"/>
    </location>
</feature>
<feature type="strand" evidence="8">
    <location>
        <begin position="179"/>
        <end position="182"/>
    </location>
</feature>
<feature type="strand" evidence="8">
    <location>
        <begin position="188"/>
        <end position="200"/>
    </location>
</feature>
<feature type="strand" evidence="8">
    <location>
        <begin position="204"/>
        <end position="216"/>
    </location>
</feature>
<feature type="turn" evidence="8">
    <location>
        <begin position="218"/>
        <end position="221"/>
    </location>
</feature>
<feature type="strand" evidence="8">
    <location>
        <begin position="222"/>
        <end position="229"/>
    </location>
</feature>
<feature type="turn" evidence="8">
    <location>
        <begin position="230"/>
        <end position="233"/>
    </location>
</feature>
<feature type="strand" evidence="8">
    <location>
        <begin position="234"/>
        <end position="237"/>
    </location>
</feature>
<feature type="strand" evidence="8">
    <location>
        <begin position="239"/>
        <end position="241"/>
    </location>
</feature>
<feature type="turn" evidence="8">
    <location>
        <begin position="252"/>
        <end position="254"/>
    </location>
</feature>
<feature type="strand" evidence="8">
    <location>
        <begin position="268"/>
        <end position="271"/>
    </location>
</feature>
<feature type="strand" evidence="8">
    <location>
        <begin position="275"/>
        <end position="277"/>
    </location>
</feature>
<feature type="strand" evidence="8">
    <location>
        <begin position="279"/>
        <end position="282"/>
    </location>
</feature>
<feature type="strand" evidence="8">
    <location>
        <begin position="288"/>
        <end position="290"/>
    </location>
</feature>
<feature type="helix" evidence="8">
    <location>
        <begin position="295"/>
        <end position="297"/>
    </location>
</feature>
<feature type="strand" evidence="8">
    <location>
        <begin position="304"/>
        <end position="318"/>
    </location>
</feature>
<feature type="strand" evidence="8">
    <location>
        <begin position="321"/>
        <end position="333"/>
    </location>
</feature>
<feature type="strand" evidence="8">
    <location>
        <begin position="343"/>
        <end position="351"/>
    </location>
</feature>
<feature type="strand" evidence="8">
    <location>
        <begin position="358"/>
        <end position="366"/>
    </location>
</feature>
<accession>A6L3B5</accession>
<comment type="function">
    <text evidence="5">Probably a component of the fimbrium tip. Fimbriae are filamentous appendages on the cell surface that mediate cell adhesion and biofilm formation.</text>
</comment>
<comment type="subunit">
    <text evidence="5">May be part of the fimbrial tip.</text>
</comment>
<comment type="subcellular location">
    <subcellularLocation>
        <location evidence="5">Fimbrium</location>
    </subcellularLocation>
    <subcellularLocation>
        <location evidence="4">Cell outer membrane</location>
    </subcellularLocation>
    <text evidence="5">Probably synthesized as a palmitoylated precursor. Efficient export to the outer membrane and integration into fimbriae requires lipidation and subsequent proteolytic removal of the lipidated propeptide. Probably part of the fimbrium tip.</text>
</comment>
<comment type="similarity">
    <text evidence="4">Belongs to the bacteroidetes fimbrillin superfamily. Mfa-like family.</text>
</comment>
<protein>
    <recommendedName>
        <fullName>Fimbrium subunit Fim1C</fullName>
    </recommendedName>
</protein>
<name>FIM1C_PHOV8</name>
<evidence type="ECO:0000255" key="1"/>
<evidence type="ECO:0000255" key="2">
    <source>
        <dbReference type="PROSITE-ProRule" id="PRU00303"/>
    </source>
</evidence>
<evidence type="ECO:0000303" key="3">
    <source>
    </source>
</evidence>
<evidence type="ECO:0000305" key="4"/>
<evidence type="ECO:0000305" key="5">
    <source>
    </source>
</evidence>
<evidence type="ECO:0000312" key="6">
    <source>
        <dbReference type="EMBL" id="ABR40179.1"/>
    </source>
</evidence>
<evidence type="ECO:0000312" key="7">
    <source>
        <dbReference type="Proteomes" id="UP000002861"/>
    </source>
</evidence>
<evidence type="ECO:0007829" key="8">
    <source>
        <dbReference type="PDB" id="4QB7"/>
    </source>
</evidence>
<sequence length="379" mass="42244">MEVKSLLMVMATLTIAGCSQNEMTEMNPDTNRTIGLDVYTEVQTRGTETTTSTLKANAGFGIFAYQTSSAGWNSEKGNTTPNFMYNEHATWTSDSWGYTNLRFWPIDDKKITFFAYAPYESKPEVGTDQKITLSGQNAKGAPTITFEVKTSNNWKDMIDLVTDCHTAIQDQTNESNKGTVQFKFSHVLTQIANIKVKPDVNLGTDTKIFVTGLKLDPGSTTLYNKAVYKFDNDTWEAISPDASYFSTEQDLSDFLNKTTTDQWGYNKSSINVSDDQNATALFSDTEALYFIPVNNKNGTTNAGDLKLKINYDIVTKVTDTSNLTSTITNKEVSLPKNTFKKGTKHTYVLTIKMNAIKITVEDNMEGWTDDSDSDINVEK</sequence>
<gene>
    <name type="primary">fim1C</name>
    <name evidence="6" type="ordered locus">BVU_2522</name>
</gene>
<keyword id="KW-0002">3D-structure</keyword>
<keyword id="KW-0998">Cell outer membrane</keyword>
<keyword id="KW-0281">Fimbrium</keyword>
<keyword id="KW-0449">Lipoprotein</keyword>
<keyword id="KW-0472">Membrane</keyword>
<keyword id="KW-0564">Palmitate</keyword>
<keyword id="KW-0732">Signal</keyword>
<organism evidence="7">
    <name type="scientific">Phocaeicola vulgatus (strain ATCC 8482 / DSM 1447 / JCM 5826 / CCUG 4940 / NBRC 14291 / NCTC 11154)</name>
    <name type="common">Bacteroides vulgatus</name>
    <dbReference type="NCBI Taxonomy" id="435590"/>
    <lineage>
        <taxon>Bacteria</taxon>
        <taxon>Pseudomonadati</taxon>
        <taxon>Bacteroidota</taxon>
        <taxon>Bacteroidia</taxon>
        <taxon>Bacteroidales</taxon>
        <taxon>Bacteroidaceae</taxon>
        <taxon>Phocaeicola</taxon>
    </lineage>
</organism>
<reference evidence="6 7" key="1">
    <citation type="journal article" date="2007" name="PLoS Biol.">
        <title>Evolution of symbiotic bacteria in the distal human intestine.</title>
        <authorList>
            <person name="Xu J."/>
            <person name="Mahowald M.A."/>
            <person name="Ley R.E."/>
            <person name="Lozupone C.A."/>
            <person name="Hamady M."/>
            <person name="Martens E.C."/>
            <person name="Henrissat B."/>
            <person name="Coutinho P.M."/>
            <person name="Minx P."/>
            <person name="Latreille P."/>
            <person name="Cordum H."/>
            <person name="Van Brunt A."/>
            <person name="Kim K."/>
            <person name="Fulton R.S."/>
            <person name="Fulton L.A."/>
            <person name="Clifton S.W."/>
            <person name="Wilson R.K."/>
            <person name="Knight R.D."/>
            <person name="Gordon J.I."/>
        </authorList>
    </citation>
    <scope>NUCLEOTIDE SEQUENCE [LARGE SCALE GENOMIC DNA]</scope>
    <source>
        <strain evidence="7">ATCC 8482 / DSM 1447 / JCM 5826 / CCUG 4940 / NBRC 14291 / NCTC 11154</strain>
    </source>
</reference>
<reference key="2">
    <citation type="journal article" date="2016" name="Cell">
        <title>A distinct type of pilus from the human microbiome.</title>
        <authorList>
            <person name="Xu Q."/>
            <person name="Shoji M."/>
            <person name="Shibata S."/>
            <person name="Naito M."/>
            <person name="Sato K."/>
            <person name="Elsliger M.A."/>
            <person name="Grant J.C."/>
            <person name="Axelrod H.L."/>
            <person name="Chiu H.J."/>
            <person name="Farr C.L."/>
            <person name="Jaroszewski L."/>
            <person name="Knuth M.W."/>
            <person name="Deacon A.M."/>
            <person name="Godzik A."/>
            <person name="Lesley S.A."/>
            <person name="Curtis M.A."/>
            <person name="Nakayama K."/>
            <person name="Wilson I.A."/>
        </authorList>
    </citation>
    <scope>X-RAY CRYSTALLOGRAPHY (2.55 ANGSTROMS) OF 22-379</scope>
    <scope>FUNCTION</scope>
    <scope>SUBUNIT</scope>
    <scope>SUBCELLULAR LOCATION</scope>
    <source>
        <strain evidence="3">ATCC 8482 / DSM 1447 / JCM 5826 / CCUG 4940 / NBRC 14291 / NCTC 11154</strain>
    </source>
</reference>
<dbReference type="EMBL" id="CP000139">
    <property type="protein sequence ID" value="ABR40179.1"/>
    <property type="molecule type" value="Genomic_DNA"/>
</dbReference>
<dbReference type="RefSeq" id="WP_005847458.1">
    <property type="nucleotide sequence ID" value="NZ_JANSWM010000062.1"/>
</dbReference>
<dbReference type="PDB" id="4QB7">
    <property type="method" value="X-ray"/>
    <property type="resolution" value="2.55 A"/>
    <property type="chains" value="A=22-379"/>
</dbReference>
<dbReference type="PDBsum" id="4QB7"/>
<dbReference type="SMR" id="A6L3B5"/>
<dbReference type="STRING" id="435590.BVU_2522"/>
<dbReference type="PaxDb" id="435590-BVU_2522"/>
<dbReference type="DNASU" id="5303486"/>
<dbReference type="GeneID" id="5303486"/>
<dbReference type="KEGG" id="bvu:BVU_2522"/>
<dbReference type="eggNOG" id="ENOG5033U1D">
    <property type="taxonomic scope" value="Bacteria"/>
</dbReference>
<dbReference type="HOGENOM" id="CLU_042631_0_0_10"/>
<dbReference type="BioCyc" id="BVUL435590:G1G59-2626-MONOMER"/>
<dbReference type="EvolutionaryTrace" id="A6L3B5"/>
<dbReference type="Proteomes" id="UP000002861">
    <property type="component" value="Chromosome"/>
</dbReference>
<dbReference type="GO" id="GO:0009279">
    <property type="term" value="C:cell outer membrane"/>
    <property type="evidence" value="ECO:0007669"/>
    <property type="project" value="UniProtKB-SubCell"/>
</dbReference>
<dbReference type="GO" id="GO:0009289">
    <property type="term" value="C:pilus"/>
    <property type="evidence" value="ECO:0007669"/>
    <property type="project" value="UniProtKB-SubCell"/>
</dbReference>
<dbReference type="CDD" id="cd13120">
    <property type="entry name" value="BF2867_like_N"/>
    <property type="match status" value="1"/>
</dbReference>
<dbReference type="Gene3D" id="2.60.40.2620">
    <property type="entry name" value="Fimbrillin-like"/>
    <property type="match status" value="1"/>
</dbReference>
<dbReference type="InterPro" id="IPR025049">
    <property type="entry name" value="Mfa-like_1"/>
</dbReference>
<dbReference type="InterPro" id="IPR042278">
    <property type="entry name" value="Mfa-like_1_N"/>
</dbReference>
<dbReference type="Pfam" id="PF13149">
    <property type="entry name" value="Mfa_like_1"/>
    <property type="match status" value="1"/>
</dbReference>
<dbReference type="PROSITE" id="PS51257">
    <property type="entry name" value="PROKAR_LIPOPROTEIN"/>
    <property type="match status" value="1"/>
</dbReference>